<evidence type="ECO:0000250" key="1"/>
<evidence type="ECO:0000250" key="2">
    <source>
        <dbReference type="UniProtKB" id="P94522"/>
    </source>
</evidence>
<evidence type="ECO:0000255" key="3"/>
<evidence type="ECO:0000269" key="4">
    <source>
    </source>
</evidence>
<evidence type="ECO:0000305" key="5"/>
<protein>
    <recommendedName>
        <fullName>Arabinan endo-1,5-alpha-L-arabinosidase B</fullName>
        <ecNumber>3.2.1.99</ecNumber>
    </recommendedName>
    <alternativeName>
        <fullName>Endo-1,5-alpha-L-arabinanase B</fullName>
        <shortName>ABN B</shortName>
    </alternativeName>
</protein>
<feature type="signal peptide" evidence="3">
    <location>
        <begin position="1"/>
        <end position="16"/>
    </location>
</feature>
<feature type="chain" id="PRO_0000394630" description="Arabinan endo-1,5-alpha-L-arabinosidase B">
    <location>
        <begin position="17"/>
        <end position="400"/>
    </location>
</feature>
<feature type="active site" description="Proton acceptor" evidence="2">
    <location>
        <position position="70"/>
    </location>
</feature>
<feature type="active site" description="Proton donor" evidence="2">
    <location>
        <position position="277"/>
    </location>
</feature>
<feature type="site" description="Important for catalytic activity, responsible for pKa modulation of the active site Glu and correct orientation of both the proton donor and substrate" evidence="2">
    <location>
        <position position="190"/>
    </location>
</feature>
<feature type="glycosylation site" description="N-linked (GlcNAc...) asparagine" evidence="3">
    <location>
        <position position="24"/>
    </location>
</feature>
<feature type="glycosylation site" description="N-linked (GlcNAc...) asparagine" evidence="3">
    <location>
        <position position="184"/>
    </location>
</feature>
<feature type="glycosylation site" description="N-linked (GlcNAc...) asparagine" evidence="3">
    <location>
        <position position="372"/>
    </location>
</feature>
<reference key="1">
    <citation type="journal article" date="2006" name="Proc. Natl. Acad. Sci. U.S.A.">
        <title>Development and application of a suite of polysaccharide-degrading enzymes for analyzing plant cell walls.</title>
        <authorList>
            <person name="Bauer S."/>
            <person name="Vasu P."/>
            <person name="Persson S."/>
            <person name="Mort A.J."/>
            <person name="Somerville C.R."/>
        </authorList>
    </citation>
    <scope>NUCLEOTIDE SEQUENCE [MRNA]</scope>
    <scope>FUNCTION</scope>
    <source>
        <strain>FGSC A4 / ATCC 38163 / CBS 112.46 / NRRL 194 / M139</strain>
    </source>
</reference>
<reference key="2">
    <citation type="journal article" date="2005" name="Nature">
        <title>Sequencing of Aspergillus nidulans and comparative analysis with A. fumigatus and A. oryzae.</title>
        <authorList>
            <person name="Galagan J.E."/>
            <person name="Calvo S.E."/>
            <person name="Cuomo C."/>
            <person name="Ma L.-J."/>
            <person name="Wortman J.R."/>
            <person name="Batzoglou S."/>
            <person name="Lee S.-I."/>
            <person name="Bastuerkmen M."/>
            <person name="Spevak C.C."/>
            <person name="Clutterbuck J."/>
            <person name="Kapitonov V."/>
            <person name="Jurka J."/>
            <person name="Scazzocchio C."/>
            <person name="Farman M.L."/>
            <person name="Butler J."/>
            <person name="Purcell S."/>
            <person name="Harris S."/>
            <person name="Braus G.H."/>
            <person name="Draht O."/>
            <person name="Busch S."/>
            <person name="D'Enfert C."/>
            <person name="Bouchier C."/>
            <person name="Goldman G.H."/>
            <person name="Bell-Pedersen D."/>
            <person name="Griffiths-Jones S."/>
            <person name="Doonan J.H."/>
            <person name="Yu J."/>
            <person name="Vienken K."/>
            <person name="Pain A."/>
            <person name="Freitag M."/>
            <person name="Selker E.U."/>
            <person name="Archer D.B."/>
            <person name="Penalva M.A."/>
            <person name="Oakley B.R."/>
            <person name="Momany M."/>
            <person name="Tanaka T."/>
            <person name="Kumagai T."/>
            <person name="Asai K."/>
            <person name="Machida M."/>
            <person name="Nierman W.C."/>
            <person name="Denning D.W."/>
            <person name="Caddick M.X."/>
            <person name="Hynes M."/>
            <person name="Paoletti M."/>
            <person name="Fischer R."/>
            <person name="Miller B.L."/>
            <person name="Dyer P.S."/>
            <person name="Sachs M.S."/>
            <person name="Osmani S.A."/>
            <person name="Birren B.W."/>
        </authorList>
    </citation>
    <scope>NUCLEOTIDE SEQUENCE [LARGE SCALE GENOMIC DNA]</scope>
    <source>
        <strain>FGSC A4 / ATCC 38163 / CBS 112.46 / NRRL 194 / M139</strain>
    </source>
</reference>
<reference key="3">
    <citation type="journal article" date="2009" name="Fungal Genet. Biol.">
        <title>The 2008 update of the Aspergillus nidulans genome annotation: a community effort.</title>
        <authorList>
            <person name="Wortman J.R."/>
            <person name="Gilsenan J.M."/>
            <person name="Joardar V."/>
            <person name="Deegan J."/>
            <person name="Clutterbuck J."/>
            <person name="Andersen M.R."/>
            <person name="Archer D."/>
            <person name="Bencina M."/>
            <person name="Braus G."/>
            <person name="Coutinho P."/>
            <person name="von Dohren H."/>
            <person name="Doonan J."/>
            <person name="Driessen A.J."/>
            <person name="Durek P."/>
            <person name="Espeso E."/>
            <person name="Fekete E."/>
            <person name="Flipphi M."/>
            <person name="Estrada C.G."/>
            <person name="Geysens S."/>
            <person name="Goldman G."/>
            <person name="de Groot P.W."/>
            <person name="Hansen K."/>
            <person name="Harris S.D."/>
            <person name="Heinekamp T."/>
            <person name="Helmstaedt K."/>
            <person name="Henrissat B."/>
            <person name="Hofmann G."/>
            <person name="Homan T."/>
            <person name="Horio T."/>
            <person name="Horiuchi H."/>
            <person name="James S."/>
            <person name="Jones M."/>
            <person name="Karaffa L."/>
            <person name="Karanyi Z."/>
            <person name="Kato M."/>
            <person name="Keller N."/>
            <person name="Kelly D.E."/>
            <person name="Kiel J.A."/>
            <person name="Kim J.M."/>
            <person name="van der Klei I.J."/>
            <person name="Klis F.M."/>
            <person name="Kovalchuk A."/>
            <person name="Krasevec N."/>
            <person name="Kubicek C.P."/>
            <person name="Liu B."/>
            <person name="Maccabe A."/>
            <person name="Meyer V."/>
            <person name="Mirabito P."/>
            <person name="Miskei M."/>
            <person name="Mos M."/>
            <person name="Mullins J."/>
            <person name="Nelson D.R."/>
            <person name="Nielsen J."/>
            <person name="Oakley B.R."/>
            <person name="Osmani S.A."/>
            <person name="Pakula T."/>
            <person name="Paszewski A."/>
            <person name="Paulsen I."/>
            <person name="Pilsyk S."/>
            <person name="Pocsi I."/>
            <person name="Punt P.J."/>
            <person name="Ram A.F."/>
            <person name="Ren Q."/>
            <person name="Robellet X."/>
            <person name="Robson G."/>
            <person name="Seiboth B."/>
            <person name="van Solingen P."/>
            <person name="Specht T."/>
            <person name="Sun J."/>
            <person name="Taheri-Talesh N."/>
            <person name="Takeshita N."/>
            <person name="Ussery D."/>
            <person name="vanKuyk P.A."/>
            <person name="Visser H."/>
            <person name="van de Vondervoort P.J."/>
            <person name="de Vries R.P."/>
            <person name="Walton J."/>
            <person name="Xiang X."/>
            <person name="Xiong Y."/>
            <person name="Zeng A.P."/>
            <person name="Brandt B.W."/>
            <person name="Cornell M.J."/>
            <person name="van den Hondel C.A."/>
            <person name="Visser J."/>
            <person name="Oliver S.G."/>
            <person name="Turner G."/>
        </authorList>
    </citation>
    <scope>GENOME REANNOTATION</scope>
    <source>
        <strain>FGSC A4 / ATCC 38163 / CBS 112.46 / NRRL 194 / M139</strain>
    </source>
</reference>
<name>ABNB_EMENI</name>
<keyword id="KW-0119">Carbohydrate metabolism</keyword>
<keyword id="KW-0325">Glycoprotein</keyword>
<keyword id="KW-0326">Glycosidase</keyword>
<keyword id="KW-0378">Hydrolase</keyword>
<keyword id="KW-0624">Polysaccharide degradation</keyword>
<keyword id="KW-1185">Reference proteome</keyword>
<keyword id="KW-0964">Secreted</keyword>
<keyword id="KW-0732">Signal</keyword>
<keyword id="KW-0858">Xylan degradation</keyword>
<dbReference type="EC" id="3.2.1.99"/>
<dbReference type="EMBL" id="DQ490500">
    <property type="protein sequence ID" value="ABF50876.1"/>
    <property type="molecule type" value="mRNA"/>
</dbReference>
<dbReference type="EMBL" id="AACD01000107">
    <property type="protein sequence ID" value="EAA58736.1"/>
    <property type="molecule type" value="Genomic_DNA"/>
</dbReference>
<dbReference type="EMBL" id="BN001301">
    <property type="protein sequence ID" value="CBF69642.1"/>
    <property type="molecule type" value="Genomic_DNA"/>
</dbReference>
<dbReference type="RefSeq" id="XP_663956.1">
    <property type="nucleotide sequence ID" value="XM_658864.1"/>
</dbReference>
<dbReference type="SMR" id="Q5AZC8"/>
<dbReference type="STRING" id="227321.Q5AZC8"/>
<dbReference type="CAZy" id="GH43">
    <property type="family name" value="Glycoside Hydrolase Family 43"/>
</dbReference>
<dbReference type="GlyCosmos" id="Q5AZC8">
    <property type="glycosylation" value="3 sites, No reported glycans"/>
</dbReference>
<dbReference type="EnsemblFungi" id="CBF69642">
    <property type="protein sequence ID" value="CBF69642"/>
    <property type="gene ID" value="ANIA_06352"/>
</dbReference>
<dbReference type="KEGG" id="ani:ANIA_06352"/>
<dbReference type="eggNOG" id="ENOG502S2VU">
    <property type="taxonomic scope" value="Eukaryota"/>
</dbReference>
<dbReference type="HOGENOM" id="CLU_009397_5_0_1"/>
<dbReference type="InParanoid" id="Q5AZC8"/>
<dbReference type="OMA" id="KAPWAPT"/>
<dbReference type="OrthoDB" id="195678at2759"/>
<dbReference type="UniPathway" id="UPA00667"/>
<dbReference type="Proteomes" id="UP000000560">
    <property type="component" value="Chromosome I"/>
</dbReference>
<dbReference type="GO" id="GO:0005576">
    <property type="term" value="C:extracellular region"/>
    <property type="evidence" value="ECO:0007669"/>
    <property type="project" value="UniProtKB-SubCell"/>
</dbReference>
<dbReference type="GO" id="GO:0046558">
    <property type="term" value="F:arabinan endo-1,5-alpha-L-arabinosidase activity"/>
    <property type="evidence" value="ECO:0000314"/>
    <property type="project" value="UniProtKB"/>
</dbReference>
<dbReference type="GO" id="GO:0031222">
    <property type="term" value="P:arabinan catabolic process"/>
    <property type="evidence" value="ECO:0007669"/>
    <property type="project" value="UniProtKB-UniPathway"/>
</dbReference>
<dbReference type="GO" id="GO:0045490">
    <property type="term" value="P:pectin catabolic process"/>
    <property type="evidence" value="ECO:0000314"/>
    <property type="project" value="UniProtKB"/>
</dbReference>
<dbReference type="GO" id="GO:0045493">
    <property type="term" value="P:xylan catabolic process"/>
    <property type="evidence" value="ECO:0007669"/>
    <property type="project" value="UniProtKB-KW"/>
</dbReference>
<dbReference type="CDD" id="cd18831">
    <property type="entry name" value="GH43_AnAbnA-like"/>
    <property type="match status" value="1"/>
</dbReference>
<dbReference type="Gene3D" id="2.115.10.20">
    <property type="entry name" value="Glycosyl hydrolase domain, family 43"/>
    <property type="match status" value="1"/>
</dbReference>
<dbReference type="InterPro" id="IPR050727">
    <property type="entry name" value="GH43_arabinanases"/>
</dbReference>
<dbReference type="InterPro" id="IPR006710">
    <property type="entry name" value="Glyco_hydro_43"/>
</dbReference>
<dbReference type="InterPro" id="IPR016840">
    <property type="entry name" value="Glyco_hydro_43_endo_a_Ara-ase"/>
</dbReference>
<dbReference type="InterPro" id="IPR023296">
    <property type="entry name" value="Glyco_hydro_beta-prop_sf"/>
</dbReference>
<dbReference type="PANTHER" id="PTHR43301">
    <property type="entry name" value="ARABINAN ENDO-1,5-ALPHA-L-ARABINOSIDASE"/>
    <property type="match status" value="1"/>
</dbReference>
<dbReference type="PANTHER" id="PTHR43301:SF4">
    <property type="entry name" value="ARABINAN ENDO-1,5-ALPHA-L-ARABINOSIDASE B"/>
    <property type="match status" value="1"/>
</dbReference>
<dbReference type="Pfam" id="PF04616">
    <property type="entry name" value="Glyco_hydro_43"/>
    <property type="match status" value="1"/>
</dbReference>
<dbReference type="PIRSF" id="PIRSF026534">
    <property type="entry name" value="Endo_alpha-L-arabinosidase"/>
    <property type="match status" value="1"/>
</dbReference>
<dbReference type="SUPFAM" id="SSF75005">
    <property type="entry name" value="Arabinanase/levansucrase/invertase"/>
    <property type="match status" value="1"/>
</dbReference>
<organism>
    <name type="scientific">Emericella nidulans (strain FGSC A4 / ATCC 38163 / CBS 112.46 / NRRL 194 / M139)</name>
    <name type="common">Aspergillus nidulans</name>
    <dbReference type="NCBI Taxonomy" id="227321"/>
    <lineage>
        <taxon>Eukaryota</taxon>
        <taxon>Fungi</taxon>
        <taxon>Dikarya</taxon>
        <taxon>Ascomycota</taxon>
        <taxon>Pezizomycotina</taxon>
        <taxon>Eurotiomycetes</taxon>
        <taxon>Eurotiomycetidae</taxon>
        <taxon>Eurotiales</taxon>
        <taxon>Aspergillaceae</taxon>
        <taxon>Aspergillus</taxon>
        <taxon>Aspergillus subgen. Nidulantes</taxon>
    </lineage>
</organism>
<proteinExistence type="evidence at transcript level"/>
<comment type="function">
    <text evidence="4">Endo-1,5-alpha-L-arabinanase involved in degradation of pectin. Its preferred substrate is linear 1,5-alpha-L-arabinan.</text>
</comment>
<comment type="catalytic activity">
    <reaction>
        <text>Endohydrolysis of (1-&gt;5)-alpha-arabinofuranosidic linkages in (1-&gt;5)-arabinans.</text>
        <dbReference type="EC" id="3.2.1.99"/>
    </reaction>
</comment>
<comment type="pathway">
    <text>Glycan metabolism; L-arabinan degradation.</text>
</comment>
<comment type="subcellular location">
    <subcellularLocation>
        <location evidence="1">Secreted</location>
    </subcellularLocation>
</comment>
<comment type="similarity">
    <text evidence="5">Belongs to the glycosyl hydrolase 43 family.</text>
</comment>
<gene>
    <name type="primary">abnB</name>
    <name type="ORF">AN6352</name>
</gene>
<sequence>MAVIFVLFFLVSMALSARIRPSFNGTALSGTSNKHPFEPGPNTIFREEVPPSAAASGFPSAHGTELRTHDPSIIKVGSIYYSYSVGPSITIHQAFSLDGPWTEVGALLSGESVIKKGDRKAPWAANTIYINGRYYCYYSVSNSGCRDSAIGVASSAFPGPGEWTDHGLIIQSGTGEGSDVFPLNQSNTIDPNVFVDGDGTAYLNFGSFWTGLWQVPLEEELVTVKGLQDGTLDAVHLAAEPGKVWRSKLANSKAKTVSTSKTGSPICGDPTGGHPIEGGFMAYHAPYYYMWFSWGRCCEFKDPAMRSNGKEYRIRVGRSTSARGPFVDKQGIDLVDGGGETVYGSNGDVFAPGGQGILTDEFGDILYYHYLNSSVSYDFADARLGYNRLEYVDGWPVAVY</sequence>
<accession>Q5AZC8</accession>
<accession>C8V0Y7</accession>
<accession>Q1HFS4</accession>